<evidence type="ECO:0000250" key="1"/>
<evidence type="ECO:0000255" key="2">
    <source>
        <dbReference type="PROSITE-ProRule" id="PRU00143"/>
    </source>
</evidence>
<evidence type="ECO:0000255" key="3">
    <source>
        <dbReference type="PROSITE-ProRule" id="PRU00145"/>
    </source>
</evidence>
<evidence type="ECO:0000305" key="4"/>
<gene>
    <name type="primary">Sntg2</name>
</gene>
<keyword id="KW-0009">Actin-binding</keyword>
<keyword id="KW-1003">Cell membrane</keyword>
<keyword id="KW-0963">Cytoplasm</keyword>
<keyword id="KW-0206">Cytoskeleton</keyword>
<keyword id="KW-0472">Membrane</keyword>
<keyword id="KW-1185">Reference proteome</keyword>
<name>SNTG2_MOUSE</name>
<organism>
    <name type="scientific">Mus musculus</name>
    <name type="common">Mouse</name>
    <dbReference type="NCBI Taxonomy" id="10090"/>
    <lineage>
        <taxon>Eukaryota</taxon>
        <taxon>Metazoa</taxon>
        <taxon>Chordata</taxon>
        <taxon>Craniata</taxon>
        <taxon>Vertebrata</taxon>
        <taxon>Euteleostomi</taxon>
        <taxon>Mammalia</taxon>
        <taxon>Eutheria</taxon>
        <taxon>Euarchontoglires</taxon>
        <taxon>Glires</taxon>
        <taxon>Rodentia</taxon>
        <taxon>Myomorpha</taxon>
        <taxon>Muroidea</taxon>
        <taxon>Muridae</taxon>
        <taxon>Murinae</taxon>
        <taxon>Mus</taxon>
        <taxon>Mus</taxon>
    </lineage>
</organism>
<feature type="chain" id="PRO_0000184016" description="Gamma-2-syntrophin">
    <location>
        <begin position="1"/>
        <end position="539"/>
    </location>
</feature>
<feature type="domain" description="PDZ" evidence="2">
    <location>
        <begin position="73"/>
        <end position="156"/>
    </location>
</feature>
<feature type="domain" description="PH" evidence="3">
    <location>
        <begin position="296"/>
        <end position="421"/>
    </location>
</feature>
<protein>
    <recommendedName>
        <fullName>Gamma-2-syntrophin</fullName>
        <shortName>G2SYN</shortName>
    </recommendedName>
    <alternativeName>
        <fullName>Syntrophin-5</fullName>
        <shortName>SYN5</shortName>
    </alternativeName>
</protein>
<reference key="1">
    <citation type="submission" date="2001-04" db="EMBL/GenBank/DDBJ databases">
        <title>Cloning and characterization of mouse gamma syntrophins.</title>
        <authorList>
            <person name="Alessi A."/>
            <person name="Adams M.E."/>
            <person name="Froehner S.C."/>
        </authorList>
    </citation>
    <scope>NUCLEOTIDE SEQUENCE [MRNA]</scope>
    <source>
        <strain>C57BL/6J</strain>
    </source>
</reference>
<reference key="2">
    <citation type="journal article" date="2004" name="Genome Res.">
        <title>The status, quality, and expansion of the NIH full-length cDNA project: the Mammalian Gene Collection (MGC).</title>
        <authorList>
            <consortium name="The MGC Project Team"/>
        </authorList>
    </citation>
    <scope>NUCLEOTIDE SEQUENCE [LARGE SCALE MRNA]</scope>
    <source>
        <tissue>Brain</tissue>
    </source>
</reference>
<dbReference type="EMBL" id="AF367760">
    <property type="protein sequence ID" value="AAK53400.1"/>
    <property type="molecule type" value="mRNA"/>
</dbReference>
<dbReference type="EMBL" id="BC138956">
    <property type="protein sequence ID" value="AAI38957.1"/>
    <property type="molecule type" value="mRNA"/>
</dbReference>
<dbReference type="CCDS" id="CCDS25858.1"/>
<dbReference type="RefSeq" id="NP_766539.2">
    <property type="nucleotide sequence ID" value="NM_172951.3"/>
</dbReference>
<dbReference type="SMR" id="Q925E0"/>
<dbReference type="BioGRID" id="234517">
    <property type="interactions" value="5"/>
</dbReference>
<dbReference type="FunCoup" id="Q925E0">
    <property type="interactions" value="560"/>
</dbReference>
<dbReference type="IntAct" id="Q925E0">
    <property type="interactions" value="3"/>
</dbReference>
<dbReference type="MINT" id="Q925E0"/>
<dbReference type="STRING" id="10090.ENSMUSP00000021004"/>
<dbReference type="iPTMnet" id="Q925E0"/>
<dbReference type="PhosphoSitePlus" id="Q925E0"/>
<dbReference type="PaxDb" id="10090-ENSMUSP00000021004"/>
<dbReference type="ProteomicsDB" id="261537"/>
<dbReference type="Antibodypedia" id="26199">
    <property type="antibodies" value="77 antibodies from 21 providers"/>
</dbReference>
<dbReference type="DNASU" id="268534"/>
<dbReference type="Ensembl" id="ENSMUST00000021004.14">
    <property type="protein sequence ID" value="ENSMUSP00000021004.8"/>
    <property type="gene ID" value="ENSMUSG00000020672.15"/>
</dbReference>
<dbReference type="GeneID" id="268534"/>
<dbReference type="KEGG" id="mmu:268534"/>
<dbReference type="UCSC" id="uc007ngr.2">
    <property type="organism name" value="mouse"/>
</dbReference>
<dbReference type="AGR" id="MGI:1919541"/>
<dbReference type="CTD" id="54221"/>
<dbReference type="MGI" id="MGI:1919541">
    <property type="gene designation" value="Sntg2"/>
</dbReference>
<dbReference type="VEuPathDB" id="HostDB:ENSMUSG00000020672"/>
<dbReference type="eggNOG" id="KOG3549">
    <property type="taxonomic scope" value="Eukaryota"/>
</dbReference>
<dbReference type="GeneTree" id="ENSGT00950000182863"/>
<dbReference type="HOGENOM" id="CLU_039445_0_0_1"/>
<dbReference type="InParanoid" id="Q925E0"/>
<dbReference type="OMA" id="LNNNQPW"/>
<dbReference type="OrthoDB" id="9975356at2759"/>
<dbReference type="PhylomeDB" id="Q925E0"/>
<dbReference type="TreeFam" id="TF317932"/>
<dbReference type="Reactome" id="R-MMU-9913351">
    <property type="pathway name" value="Formation of the dystrophin-glycoprotein complex (DGC)"/>
</dbReference>
<dbReference type="BioGRID-ORCS" id="268534">
    <property type="hits" value="2 hits in 76 CRISPR screens"/>
</dbReference>
<dbReference type="ChiTaRS" id="Sntg2">
    <property type="organism name" value="mouse"/>
</dbReference>
<dbReference type="PRO" id="PR:Q925E0"/>
<dbReference type="Proteomes" id="UP000000589">
    <property type="component" value="Chromosome 12"/>
</dbReference>
<dbReference type="RNAct" id="Q925E0">
    <property type="molecule type" value="protein"/>
</dbReference>
<dbReference type="Bgee" id="ENSMUSG00000020672">
    <property type="expression patterns" value="Expressed in retinal neural layer and 111 other cell types or tissues"/>
</dbReference>
<dbReference type="ExpressionAtlas" id="Q925E0">
    <property type="expression patterns" value="baseline and differential"/>
</dbReference>
<dbReference type="GO" id="GO:0005737">
    <property type="term" value="C:cytoplasm"/>
    <property type="evidence" value="ECO:0007669"/>
    <property type="project" value="UniProtKB-KW"/>
</dbReference>
<dbReference type="GO" id="GO:0005856">
    <property type="term" value="C:cytoskeleton"/>
    <property type="evidence" value="ECO:0007669"/>
    <property type="project" value="UniProtKB-SubCell"/>
</dbReference>
<dbReference type="GO" id="GO:0005654">
    <property type="term" value="C:nucleoplasm"/>
    <property type="evidence" value="ECO:0007669"/>
    <property type="project" value="Ensembl"/>
</dbReference>
<dbReference type="GO" id="GO:0042383">
    <property type="term" value="C:sarcolemma"/>
    <property type="evidence" value="ECO:0007669"/>
    <property type="project" value="UniProtKB-SubCell"/>
</dbReference>
<dbReference type="GO" id="GO:0003779">
    <property type="term" value="F:actin binding"/>
    <property type="evidence" value="ECO:0007669"/>
    <property type="project" value="UniProtKB-KW"/>
</dbReference>
<dbReference type="GO" id="GO:0097109">
    <property type="term" value="F:neuroligin family protein binding"/>
    <property type="evidence" value="ECO:0007669"/>
    <property type="project" value="Ensembl"/>
</dbReference>
<dbReference type="GO" id="GO:0030165">
    <property type="term" value="F:PDZ domain binding"/>
    <property type="evidence" value="ECO:0007669"/>
    <property type="project" value="Ensembl"/>
</dbReference>
<dbReference type="GO" id="GO:0005198">
    <property type="term" value="F:structural molecule activity"/>
    <property type="evidence" value="ECO:0007669"/>
    <property type="project" value="InterPro"/>
</dbReference>
<dbReference type="CDD" id="cd06801">
    <property type="entry name" value="PDZ_syntrophin-like"/>
    <property type="match status" value="1"/>
</dbReference>
<dbReference type="FunFam" id="2.30.42.10:FF:000080">
    <property type="entry name" value="Syntrophin gamma 1"/>
    <property type="match status" value="1"/>
</dbReference>
<dbReference type="Gene3D" id="2.30.42.10">
    <property type="match status" value="1"/>
</dbReference>
<dbReference type="Gene3D" id="2.30.29.30">
    <property type="entry name" value="Pleckstrin-homology domain (PH domain)/Phosphotyrosine-binding domain (PTB)"/>
    <property type="match status" value="1"/>
</dbReference>
<dbReference type="InterPro" id="IPR001478">
    <property type="entry name" value="PDZ"/>
</dbReference>
<dbReference type="InterPro" id="IPR036034">
    <property type="entry name" value="PDZ_sf"/>
</dbReference>
<dbReference type="InterPro" id="IPR011993">
    <property type="entry name" value="PH-like_dom_sf"/>
</dbReference>
<dbReference type="InterPro" id="IPR001849">
    <property type="entry name" value="PH_domain"/>
</dbReference>
<dbReference type="InterPro" id="IPR015482">
    <property type="entry name" value="Syntrophin"/>
</dbReference>
<dbReference type="InterPro" id="IPR055108">
    <property type="entry name" value="Syntrophin_4th"/>
</dbReference>
<dbReference type="PANTHER" id="PTHR10554:SF3">
    <property type="entry name" value="GAMMA-2-SYNTROPHIN"/>
    <property type="match status" value="1"/>
</dbReference>
<dbReference type="PANTHER" id="PTHR10554">
    <property type="entry name" value="SYNTROPHIN"/>
    <property type="match status" value="1"/>
</dbReference>
<dbReference type="Pfam" id="PF00595">
    <property type="entry name" value="PDZ"/>
    <property type="match status" value="1"/>
</dbReference>
<dbReference type="Pfam" id="PF23012">
    <property type="entry name" value="Syntrophin_4th"/>
    <property type="match status" value="1"/>
</dbReference>
<dbReference type="SMART" id="SM00228">
    <property type="entry name" value="PDZ"/>
    <property type="match status" value="1"/>
</dbReference>
<dbReference type="SUPFAM" id="SSF50156">
    <property type="entry name" value="PDZ domain-like"/>
    <property type="match status" value="1"/>
</dbReference>
<dbReference type="SUPFAM" id="SSF50729">
    <property type="entry name" value="PH domain-like"/>
    <property type="match status" value="2"/>
</dbReference>
<dbReference type="PROSITE" id="PS50106">
    <property type="entry name" value="PDZ"/>
    <property type="match status" value="1"/>
</dbReference>
<dbReference type="PROSITE" id="PS50003">
    <property type="entry name" value="PH_DOMAIN"/>
    <property type="match status" value="1"/>
</dbReference>
<proteinExistence type="evidence at protein level"/>
<accession>Q925E0</accession>
<accession>B2RSQ0</accession>
<comment type="function">
    <text evidence="1">Adapter protein that binds to and probably organizes the subcellular localization of a variety of proteins. May link various receptors to the actin cytoskeleton and the dystrophin glycoprotein complex (By similarity).</text>
</comment>
<comment type="subunit">
    <text evidence="1">Interacts with the dystrophin protein DMD and related proteins DTNA and DTNB.</text>
</comment>
<comment type="interaction">
    <interactant intactId="EBI-8521556">
        <id>Q925E0</id>
    </interactant>
    <interactant intactId="EBI-489993">
        <id>P25100</id>
        <label>ADRA1D</label>
    </interactant>
    <organismsDiffer>true</organismsDiffer>
    <experiments>2</experiments>
</comment>
<comment type="subcellular location">
    <subcellularLocation>
        <location>Cell membrane</location>
        <location>Sarcolemma</location>
        <topology>Peripheral membrane protein</topology>
        <orientation>Cytoplasmic side</orientation>
    </subcellularLocation>
    <subcellularLocation>
        <location>Cytoplasm</location>
        <location>Cytoskeleton</location>
    </subcellularLocation>
    <text>In skeletal muscle, it localizes at the cytoplasmic side of the sarcolemmal membrane.</text>
</comment>
<comment type="domain">
    <text evidence="1">The association with dystrophin or related proteins probably leaves the PDZ domain available to recruit proteins to the membrane.</text>
</comment>
<comment type="similarity">
    <text evidence="4">Belongs to the syntrophin family.</text>
</comment>
<sequence>MSAEGSQSLAAPRGRPSHLLVPARTKTALALLYDEGLENAYDVRLKLTKEVLTIQKQDVVCIGGAPPGANHRTVTLRRQPVGGLGLSIKGGAEHGVPVVISKIFKDQAADQTEMLFIGDAVLQVNGINVENATHEEVVHLLRNAGDDVTITVEYLREAPSFLKLPLGSPGPSSDHSSRASSPLFDSGLHLNGHCSHTAPSSPSSPIANEPKYEKRWLDTLSVPLSMARISRYKAGTEKLRSSALEVLALDGASTGVLQFSTAQDCADWLRSISTNISDLTLQHMKMANKCCSPCDQVVHMGWVNERLQGADNSQNFRPKFLALRGSSFYIFGAPPVSTLDWGRAERAYNLCEVLFKVHKFWLSDNYWLQANLYLGLQDFDCEDPRSYCFSVLANHGKSHIFSVELGSELAVWEKAFQRATFMEVQRTGSKTYLCSWQGETLCFTVDFALGFTCFDGKTKNVLWRFKFSQLKGSSDDGKTRVKLLFQNLDTKQIETKELEFQDLTAVLHCIHSFIAAKVASLDPVFMDSQSMARRYLCSS</sequence>